<keyword id="KW-0204">Cytolysis</keyword>
<keyword id="KW-0354">Hemolysis</keyword>
<organism>
    <name type="scientific">Citrobacter freundii</name>
    <dbReference type="NCBI Taxonomy" id="546"/>
    <lineage>
        <taxon>Bacteria</taxon>
        <taxon>Pseudomonadati</taxon>
        <taxon>Pseudomonadota</taxon>
        <taxon>Gammaproteobacteria</taxon>
        <taxon>Enterobacterales</taxon>
        <taxon>Enterobacteriaceae</taxon>
        <taxon>Citrobacter</taxon>
        <taxon>Citrobacter freundii complex</taxon>
    </lineage>
</organism>
<protein>
    <recommendedName>
        <fullName>Citrolysin protein 2</fullName>
    </recommendedName>
</protein>
<proteinExistence type="predicted"/>
<sequence>MNICISWFRKQTHAGQSMRRKKGVACNNGSFFQRRSRIKAIGNLSVVWRSIKTVIIWEVIYIFAGILLTEEGSDVMRMRILFVIIRIVFPLNFIPPNSKNRPRTIKCKRVLNMTERSNSFRSFRPRSSIDISRP</sequence>
<dbReference type="PIR" id="S07698">
    <property type="entry name" value="S07698"/>
</dbReference>
<dbReference type="SMR" id="P23183"/>
<dbReference type="GO" id="GO:0031640">
    <property type="term" value="P:killing of cells of another organism"/>
    <property type="evidence" value="ECO:0007669"/>
    <property type="project" value="UniProtKB-KW"/>
</dbReference>
<name>CIR2_CITFR</name>
<reference key="1">
    <citation type="journal article" date="1988" name="FEMS Microbiol. Lett.">
        <title>DNA sequence of haemolysin genes from Citrobacter freundii.</title>
        <authorList>
            <person name="al Zaag A."/>
            <person name="Pemberton J.M."/>
        </authorList>
    </citation>
    <scope>NUCLEOTIDE SEQUENCE [GENOMIC DNA]</scope>
</reference>
<accession>P23183</accession>
<feature type="chain" id="PRO_0000196250" description="Citrolysin protein 2">
    <location>
        <begin position="1"/>
        <end position="134"/>
    </location>
</feature>